<organism>
    <name type="scientific">Saccharum officinarum</name>
    <name type="common">Sugarcane</name>
    <dbReference type="NCBI Taxonomy" id="4547"/>
    <lineage>
        <taxon>Eukaryota</taxon>
        <taxon>Viridiplantae</taxon>
        <taxon>Streptophyta</taxon>
        <taxon>Embryophyta</taxon>
        <taxon>Tracheophyta</taxon>
        <taxon>Spermatophyta</taxon>
        <taxon>Magnoliopsida</taxon>
        <taxon>Liliopsida</taxon>
        <taxon>Poales</taxon>
        <taxon>Poaceae</taxon>
        <taxon>PACMAD clade</taxon>
        <taxon>Panicoideae</taxon>
        <taxon>Andropogonodae</taxon>
        <taxon>Andropogoneae</taxon>
        <taxon>Saccharinae</taxon>
        <taxon>Saccharum</taxon>
        <taxon>Saccharum officinarum species complex</taxon>
    </lineage>
</organism>
<geneLocation type="chloroplast"/>
<dbReference type="EC" id="1.97.1.12" evidence="1"/>
<dbReference type="EMBL" id="AP006714">
    <property type="protein sequence ID" value="BAD27292.1"/>
    <property type="molecule type" value="Genomic_DNA"/>
</dbReference>
<dbReference type="RefSeq" id="YP_009389570.1">
    <property type="nucleotide sequence ID" value="NC_035224.1"/>
</dbReference>
<dbReference type="SMR" id="Q6ENW4"/>
<dbReference type="GeneID" id="33347844"/>
<dbReference type="GO" id="GO:0009535">
    <property type="term" value="C:chloroplast thylakoid membrane"/>
    <property type="evidence" value="ECO:0007669"/>
    <property type="project" value="UniProtKB-SubCell"/>
</dbReference>
<dbReference type="GO" id="GO:0009522">
    <property type="term" value="C:photosystem I"/>
    <property type="evidence" value="ECO:0007669"/>
    <property type="project" value="UniProtKB-KW"/>
</dbReference>
<dbReference type="GO" id="GO:0051539">
    <property type="term" value="F:4 iron, 4 sulfur cluster binding"/>
    <property type="evidence" value="ECO:0007669"/>
    <property type="project" value="UniProtKB-KW"/>
</dbReference>
<dbReference type="GO" id="GO:0016168">
    <property type="term" value="F:chlorophyll binding"/>
    <property type="evidence" value="ECO:0007669"/>
    <property type="project" value="UniProtKB-KW"/>
</dbReference>
<dbReference type="GO" id="GO:0009055">
    <property type="term" value="F:electron transfer activity"/>
    <property type="evidence" value="ECO:0007669"/>
    <property type="project" value="UniProtKB-UniRule"/>
</dbReference>
<dbReference type="GO" id="GO:0000287">
    <property type="term" value="F:magnesium ion binding"/>
    <property type="evidence" value="ECO:0007669"/>
    <property type="project" value="UniProtKB-UniRule"/>
</dbReference>
<dbReference type="GO" id="GO:0016491">
    <property type="term" value="F:oxidoreductase activity"/>
    <property type="evidence" value="ECO:0007669"/>
    <property type="project" value="UniProtKB-KW"/>
</dbReference>
<dbReference type="GO" id="GO:0015979">
    <property type="term" value="P:photosynthesis"/>
    <property type="evidence" value="ECO:0007669"/>
    <property type="project" value="UniProtKB-UniRule"/>
</dbReference>
<dbReference type="FunFam" id="1.20.1130.10:FF:000001">
    <property type="entry name" value="Photosystem I P700 chlorophyll a apoprotein A2"/>
    <property type="match status" value="1"/>
</dbReference>
<dbReference type="Gene3D" id="1.20.1130.10">
    <property type="entry name" value="Photosystem I PsaA/PsaB"/>
    <property type="match status" value="1"/>
</dbReference>
<dbReference type="HAMAP" id="MF_00482">
    <property type="entry name" value="PSI_PsaB"/>
    <property type="match status" value="1"/>
</dbReference>
<dbReference type="InterPro" id="IPR001280">
    <property type="entry name" value="PSI_PsaA/B"/>
</dbReference>
<dbReference type="InterPro" id="IPR020586">
    <property type="entry name" value="PSI_PsaA/B_CS"/>
</dbReference>
<dbReference type="InterPro" id="IPR036408">
    <property type="entry name" value="PSI_PsaA/B_sf"/>
</dbReference>
<dbReference type="InterPro" id="IPR006244">
    <property type="entry name" value="PSI_PsaB"/>
</dbReference>
<dbReference type="NCBIfam" id="TIGR01336">
    <property type="entry name" value="psaB"/>
    <property type="match status" value="1"/>
</dbReference>
<dbReference type="PANTHER" id="PTHR30128">
    <property type="entry name" value="OUTER MEMBRANE PROTEIN, OMPA-RELATED"/>
    <property type="match status" value="1"/>
</dbReference>
<dbReference type="PANTHER" id="PTHR30128:SF19">
    <property type="entry name" value="PHOTOSYSTEM I P700 CHLOROPHYLL A APOPROTEIN A1-RELATED"/>
    <property type="match status" value="1"/>
</dbReference>
<dbReference type="Pfam" id="PF00223">
    <property type="entry name" value="PsaA_PsaB"/>
    <property type="match status" value="1"/>
</dbReference>
<dbReference type="PIRSF" id="PIRSF002905">
    <property type="entry name" value="PSI_A"/>
    <property type="match status" value="1"/>
</dbReference>
<dbReference type="PRINTS" id="PR00257">
    <property type="entry name" value="PHOTSYSPSAAB"/>
</dbReference>
<dbReference type="SUPFAM" id="SSF81558">
    <property type="entry name" value="Photosystem I subunits PsaA/PsaB"/>
    <property type="match status" value="1"/>
</dbReference>
<dbReference type="PROSITE" id="PS00419">
    <property type="entry name" value="PHOTOSYSTEM_I_PSAAB"/>
    <property type="match status" value="1"/>
</dbReference>
<name>PSAB_SACOF</name>
<protein>
    <recommendedName>
        <fullName evidence="1">Photosystem I P700 chlorophyll a apoprotein A2</fullName>
        <ecNumber evidence="1">1.97.1.12</ecNumber>
    </recommendedName>
    <alternativeName>
        <fullName evidence="1">PSI-B</fullName>
    </alternativeName>
    <alternativeName>
        <fullName evidence="1">PsaB</fullName>
    </alternativeName>
</protein>
<feature type="chain" id="PRO_0000088637" description="Photosystem I P700 chlorophyll a apoprotein A2">
    <location>
        <begin position="1"/>
        <end position="734"/>
    </location>
</feature>
<feature type="transmembrane region" description="Helical; Name=I" evidence="1">
    <location>
        <begin position="46"/>
        <end position="69"/>
    </location>
</feature>
<feature type="transmembrane region" description="Helical; Name=II" evidence="1">
    <location>
        <begin position="135"/>
        <end position="158"/>
    </location>
</feature>
<feature type="transmembrane region" description="Helical; Name=III" evidence="1">
    <location>
        <begin position="175"/>
        <end position="199"/>
    </location>
</feature>
<feature type="transmembrane region" description="Helical; Name=IV" evidence="1">
    <location>
        <begin position="273"/>
        <end position="291"/>
    </location>
</feature>
<feature type="transmembrane region" description="Helical; Name=V" evidence="1">
    <location>
        <begin position="330"/>
        <end position="353"/>
    </location>
</feature>
<feature type="transmembrane region" description="Helical; Name=VI" evidence="1">
    <location>
        <begin position="369"/>
        <end position="395"/>
    </location>
</feature>
<feature type="transmembrane region" description="Helical; Name=VII" evidence="1">
    <location>
        <begin position="417"/>
        <end position="439"/>
    </location>
</feature>
<feature type="transmembrane region" description="Helical; Name=VIII" evidence="1">
    <location>
        <begin position="517"/>
        <end position="535"/>
    </location>
</feature>
<feature type="transmembrane region" description="Helical; Name=IX" evidence="1">
    <location>
        <begin position="575"/>
        <end position="596"/>
    </location>
</feature>
<feature type="transmembrane region" description="Helical; Name=X" evidence="1">
    <location>
        <begin position="643"/>
        <end position="665"/>
    </location>
</feature>
<feature type="transmembrane region" description="Helical; Name=XI" evidence="1">
    <location>
        <begin position="707"/>
        <end position="727"/>
    </location>
</feature>
<feature type="binding site" evidence="1">
    <location>
        <position position="559"/>
    </location>
    <ligand>
        <name>[4Fe-4S] cluster</name>
        <dbReference type="ChEBI" id="CHEBI:49883"/>
        <note>ligand shared between dimeric partners</note>
    </ligand>
</feature>
<feature type="binding site" evidence="1">
    <location>
        <position position="568"/>
    </location>
    <ligand>
        <name>[4Fe-4S] cluster</name>
        <dbReference type="ChEBI" id="CHEBI:49883"/>
        <note>ligand shared between dimeric partners</note>
    </ligand>
</feature>
<feature type="binding site" description="axial binding residue" evidence="1">
    <location>
        <position position="654"/>
    </location>
    <ligand>
        <name>chlorophyll a</name>
        <dbReference type="ChEBI" id="CHEBI:58416"/>
        <label>B1</label>
    </ligand>
    <ligandPart>
        <name>Mg</name>
        <dbReference type="ChEBI" id="CHEBI:25107"/>
    </ligandPart>
</feature>
<feature type="binding site" description="axial binding residue" evidence="1">
    <location>
        <position position="662"/>
    </location>
    <ligand>
        <name>chlorophyll a</name>
        <dbReference type="ChEBI" id="CHEBI:58416"/>
        <label>B3</label>
    </ligand>
    <ligandPart>
        <name>Mg</name>
        <dbReference type="ChEBI" id="CHEBI:25107"/>
    </ligandPart>
</feature>
<feature type="binding site" evidence="1">
    <location>
        <position position="670"/>
    </location>
    <ligand>
        <name>chlorophyll a</name>
        <dbReference type="ChEBI" id="CHEBI:58416"/>
        <label>B3</label>
    </ligand>
</feature>
<feature type="binding site" evidence="1">
    <location>
        <position position="671"/>
    </location>
    <ligand>
        <name>phylloquinone</name>
        <dbReference type="ChEBI" id="CHEBI:18067"/>
        <label>B</label>
    </ligand>
</feature>
<proteinExistence type="inferred from homology"/>
<keyword id="KW-0004">4Fe-4S</keyword>
<keyword id="KW-0148">Chlorophyll</keyword>
<keyword id="KW-0150">Chloroplast</keyword>
<keyword id="KW-0157">Chromophore</keyword>
<keyword id="KW-0249">Electron transport</keyword>
<keyword id="KW-0408">Iron</keyword>
<keyword id="KW-0411">Iron-sulfur</keyword>
<keyword id="KW-0460">Magnesium</keyword>
<keyword id="KW-0472">Membrane</keyword>
<keyword id="KW-0479">Metal-binding</keyword>
<keyword id="KW-0560">Oxidoreductase</keyword>
<keyword id="KW-0602">Photosynthesis</keyword>
<keyword id="KW-0603">Photosystem I</keyword>
<keyword id="KW-0934">Plastid</keyword>
<keyword id="KW-0793">Thylakoid</keyword>
<keyword id="KW-0812">Transmembrane</keyword>
<keyword id="KW-1133">Transmembrane helix</keyword>
<keyword id="KW-0813">Transport</keyword>
<reference key="1">
    <citation type="journal article" date="2004" name="DNA Res.">
        <title>Complete nucleotide sequence of the sugarcane (Saccharum officinarum) chloroplast genome: a comparative analysis of four monocot chloroplast genomes.</title>
        <authorList>
            <person name="Asano T."/>
            <person name="Tsudzuki T."/>
            <person name="Takahashi S."/>
            <person name="Shimada H."/>
            <person name="Kadowaki K."/>
        </authorList>
    </citation>
    <scope>NUCLEOTIDE SEQUENCE [LARGE SCALE GENOMIC DNA]</scope>
</reference>
<gene>
    <name evidence="1" type="primary">psaB</name>
</gene>
<accession>Q6ENW4</accession>
<evidence type="ECO:0000255" key="1">
    <source>
        <dbReference type="HAMAP-Rule" id="MF_00482"/>
    </source>
</evidence>
<sequence>MELRFPRFSQGLAQDPTTRRIWFGIATAHDFESHDDITEERLYQNIFASHFGQLAIIFLWTSGNLFHVAWQGNFESWIQDPLHVRPIAHAIWDPHFGQPAVEAFTRGGAAGPVNIAYSGVYQWWYTIGLRTNEDLYTGALFLLFLSTLSLIGGWLHLQPKWKPSLSWFKNAESRLNHHLSGLFGVSSLAWTGHLVHVAIPGSRGEYVRWNNFLDVLPYPQGLGPLLTGQWNLYAQNPDSSNHLFGTTQGAGTAILTLLGGFHPQTQSLWLTDIAHHHLAIAFIFLIAGHMYRTNFGIGHSIKDLLEAHTPPGGRLGRGHKGLYDTINNSIHFQLGLALASLGVITSLVAQHMYSLPAYAFIAQDFTTQAALYTHHQYIAGFIMTGAFAHGAIFFIRDYNPEQNEDNVLARMLDHKEAIISHLSWASLFLGFHTLGLYVHNDVMLAFGTPEKQILIEPIFAQWIQSAHGKTTYGFDILLSSTNGPAFNAGRNIWLPGWLNAVNENSNSLFLTIGPGDFLVHHAIALGLHTTTLILVKGALDARGSKLMPDKKDFGYSFPCDGPGRGGTCDISAWDAFYLAVFWMLNTIGWVTFYWHWKHITLWQGNVSQFNESSTYLMGWLRDYLWLNSSQLINGYNPFGMNSLSVWAWMFLFGHLVWATGFMFLISWRGYWQELIETLAWAHERTPLANLIRWRDKPVALSIVQARLVGLAHFSVGYIFTYAAFLIASTSGKFG</sequence>
<comment type="function">
    <text evidence="1">PsaA and PsaB bind P700, the primary electron donor of photosystem I (PSI), as well as the electron acceptors A0, A1 and FX. PSI is a plastocyanin-ferredoxin oxidoreductase, converting photonic excitation into a charge separation, which transfers an electron from the donor P700 chlorophyll pair to the spectroscopically characterized acceptors A0, A1, FX, FA and FB in turn. Oxidized P700 is reduced on the lumenal side of the thylakoid membrane by plastocyanin.</text>
</comment>
<comment type="catalytic activity">
    <reaction evidence="1">
        <text>reduced [plastocyanin] + hnu + oxidized [2Fe-2S]-[ferredoxin] = oxidized [plastocyanin] + reduced [2Fe-2S]-[ferredoxin]</text>
        <dbReference type="Rhea" id="RHEA:30407"/>
        <dbReference type="Rhea" id="RHEA-COMP:10000"/>
        <dbReference type="Rhea" id="RHEA-COMP:10001"/>
        <dbReference type="Rhea" id="RHEA-COMP:10039"/>
        <dbReference type="Rhea" id="RHEA-COMP:10040"/>
        <dbReference type="ChEBI" id="CHEBI:29036"/>
        <dbReference type="ChEBI" id="CHEBI:30212"/>
        <dbReference type="ChEBI" id="CHEBI:33737"/>
        <dbReference type="ChEBI" id="CHEBI:33738"/>
        <dbReference type="ChEBI" id="CHEBI:49552"/>
        <dbReference type="EC" id="1.97.1.12"/>
    </reaction>
</comment>
<comment type="cofactor">
    <text evidence="1">P700 is a chlorophyll a/chlorophyll a' dimer, A0 is one or more chlorophyll a, A1 is one or both phylloquinones and FX is a shared 4Fe-4S iron-sulfur center.</text>
</comment>
<comment type="subunit">
    <text evidence="1">The PsaA/B heterodimer binds the P700 chlorophyll special pair and subsequent electron acceptors. PSI consists of a core antenna complex that captures photons, and an electron transfer chain that converts photonic excitation into a charge separation. The eukaryotic PSI reaction center is composed of at least 11 subunits.</text>
</comment>
<comment type="subcellular location">
    <subcellularLocation>
        <location evidence="1">Plastid</location>
        <location evidence="1">Chloroplast thylakoid membrane</location>
        <topology evidence="1">Multi-pass membrane protein</topology>
    </subcellularLocation>
</comment>
<comment type="similarity">
    <text evidence="1">Belongs to the PsaA/PsaB family.</text>
</comment>